<reference key="1">
    <citation type="journal article" date="1987" name="Science">
        <title>Identification of a family of muscarinic acetylcholine receptor genes.</title>
        <authorList>
            <person name="Bonner T.I."/>
            <person name="Buckley N.J."/>
            <person name="Young A.C."/>
            <person name="Brann M.R."/>
        </authorList>
    </citation>
    <scope>NUCLEOTIDE SEQUENCE [GENOMIC DNA]</scope>
</reference>
<reference key="2">
    <citation type="journal article" date="1988" name="Neuron">
        <title>Cloning and expression of the human and rat m5 muscarinic acetylcholine receptor genes.</title>
        <authorList>
            <person name="Bonner T.I."/>
            <person name="Young A.C."/>
            <person name="Brann M.R."/>
            <person name="Buckley N.J."/>
        </authorList>
    </citation>
    <scope>SEQUENCE REVISION TO 258 AND 261-266</scope>
</reference>
<reference key="3">
    <citation type="journal article" date="1987" name="EMBO J.">
        <title>Distinct primary structures, ligand-binding properties and tissue-specific expression of four human muscarinic acetylcholine receptors.</title>
        <authorList>
            <person name="Peralta E.G."/>
            <person name="Ashkenazi A."/>
            <person name="Winslow J.W."/>
            <person name="Smith D.H."/>
            <person name="Ramachandran J."/>
            <person name="Capon D.J."/>
        </authorList>
    </citation>
    <scope>NUCLEOTIDE SEQUENCE [GENOMIC DNA]</scope>
</reference>
<reference key="4">
    <citation type="submission" date="2002-04" db="EMBL/GenBank/DDBJ databases">
        <title>cDNA clones of human proteins involved in signal transduction sequenced by the Guthrie cDNA resource center (www.cdna.org).</title>
        <authorList>
            <person name="Puhl H.L. III"/>
            <person name="Ikeda S.R."/>
            <person name="Aronstam R.S."/>
        </authorList>
    </citation>
    <scope>NUCLEOTIDE SEQUENCE [LARGE SCALE MRNA]</scope>
    <source>
        <tissue>Brain</tissue>
    </source>
</reference>
<reference key="5">
    <citation type="submission" date="2005-09" db="EMBL/GenBank/DDBJ databases">
        <authorList>
            <person name="Mural R.J."/>
            <person name="Istrail S."/>
            <person name="Sutton G.G."/>
            <person name="Florea L."/>
            <person name="Halpern A.L."/>
            <person name="Mobarry C.M."/>
            <person name="Lippert R."/>
            <person name="Walenz B."/>
            <person name="Shatkay H."/>
            <person name="Dew I."/>
            <person name="Miller J.R."/>
            <person name="Flanigan M.J."/>
            <person name="Edwards N.J."/>
            <person name="Bolanos R."/>
            <person name="Fasulo D."/>
            <person name="Halldorsson B.V."/>
            <person name="Hannenhalli S."/>
            <person name="Turner R."/>
            <person name="Yooseph S."/>
            <person name="Lu F."/>
            <person name="Nusskern D.R."/>
            <person name="Shue B.C."/>
            <person name="Zheng X.H."/>
            <person name="Zhong F."/>
            <person name="Delcher A.L."/>
            <person name="Huson D.H."/>
            <person name="Kravitz S.A."/>
            <person name="Mouchard L."/>
            <person name="Reinert K."/>
            <person name="Remington K.A."/>
            <person name="Clark A.G."/>
            <person name="Waterman M.S."/>
            <person name="Eichler E.E."/>
            <person name="Adams M.D."/>
            <person name="Hunkapiller M.W."/>
            <person name="Myers E.W."/>
            <person name="Venter J.C."/>
        </authorList>
    </citation>
    <scope>NUCLEOTIDE SEQUENCE [LARGE SCALE GENOMIC DNA]</scope>
</reference>
<reference key="6">
    <citation type="journal article" date="2004" name="Genome Res.">
        <title>The status, quality, and expansion of the NIH full-length cDNA project: the Mammalian Gene Collection (MGC).</title>
        <authorList>
            <consortium name="The MGC Project Team"/>
        </authorList>
    </citation>
    <scope>NUCLEOTIDE SEQUENCE [LARGE SCALE MRNA]</scope>
</reference>
<keyword id="KW-0002">3D-structure</keyword>
<keyword id="KW-1003">Cell membrane</keyword>
<keyword id="KW-1015">Disulfide bond</keyword>
<keyword id="KW-0297">G-protein coupled receptor</keyword>
<keyword id="KW-0325">Glycoprotein</keyword>
<keyword id="KW-0472">Membrane</keyword>
<keyword id="KW-0597">Phosphoprotein</keyword>
<keyword id="KW-0628">Postsynaptic cell membrane</keyword>
<keyword id="KW-1267">Proteomics identification</keyword>
<keyword id="KW-0675">Receptor</keyword>
<keyword id="KW-1185">Reference proteome</keyword>
<keyword id="KW-0770">Synapse</keyword>
<keyword id="KW-0807">Transducer</keyword>
<keyword id="KW-0812">Transmembrane</keyword>
<keyword id="KW-1133">Transmembrane helix</keyword>
<protein>
    <recommendedName>
        <fullName>Muscarinic acetylcholine receptor M4</fullName>
    </recommendedName>
</protein>
<comment type="function">
    <text>The muscarinic acetylcholine receptor mediates various cellular responses, including inhibition of adenylate cyclase, breakdown of phosphoinositides and modulation of potassium channels through the action of G proteins. Primary transducing effect is inhibition of adenylate cyclase.</text>
</comment>
<comment type="subcellular location">
    <subcellularLocation>
        <location>Cell membrane</location>
        <topology>Multi-pass membrane protein</topology>
    </subcellularLocation>
    <subcellularLocation>
        <location>Postsynaptic cell membrane</location>
        <topology>Multi-pass membrane protein</topology>
    </subcellularLocation>
</comment>
<comment type="similarity">
    <text evidence="3">Belongs to the G-protein coupled receptor 1 family. Muscarinic acetylcholine receptor subfamily. CHRM4 sub-subfamily.</text>
</comment>
<organism>
    <name type="scientific">Homo sapiens</name>
    <name type="common">Human</name>
    <dbReference type="NCBI Taxonomy" id="9606"/>
    <lineage>
        <taxon>Eukaryota</taxon>
        <taxon>Metazoa</taxon>
        <taxon>Chordata</taxon>
        <taxon>Craniata</taxon>
        <taxon>Vertebrata</taxon>
        <taxon>Euteleostomi</taxon>
        <taxon>Mammalia</taxon>
        <taxon>Eutheria</taxon>
        <taxon>Euarchontoglires</taxon>
        <taxon>Primates</taxon>
        <taxon>Haplorrhini</taxon>
        <taxon>Catarrhini</taxon>
        <taxon>Hominidae</taxon>
        <taxon>Homo</taxon>
    </lineage>
</organism>
<proteinExistence type="evidence at protein level"/>
<feature type="chain" id="PRO_0000069037" description="Muscarinic acetylcholine receptor M4">
    <location>
        <begin position="1"/>
        <end position="479"/>
    </location>
</feature>
<feature type="topological domain" description="Extracellular" evidence="1">
    <location>
        <begin position="1"/>
        <end position="31"/>
    </location>
</feature>
<feature type="transmembrane region" description="Helical; Name=1" evidence="1">
    <location>
        <begin position="32"/>
        <end position="54"/>
    </location>
</feature>
<feature type="topological domain" description="Cytoplasmic" evidence="1">
    <location>
        <begin position="55"/>
        <end position="68"/>
    </location>
</feature>
<feature type="transmembrane region" description="Helical; Name=2" evidence="1">
    <location>
        <begin position="69"/>
        <end position="89"/>
    </location>
</feature>
<feature type="topological domain" description="Extracellular" evidence="1">
    <location>
        <begin position="90"/>
        <end position="106"/>
    </location>
</feature>
<feature type="transmembrane region" description="Helical; Name=3" evidence="1">
    <location>
        <begin position="107"/>
        <end position="128"/>
    </location>
</feature>
<feature type="topological domain" description="Cytoplasmic" evidence="1">
    <location>
        <begin position="129"/>
        <end position="148"/>
    </location>
</feature>
<feature type="transmembrane region" description="Helical; Name=4" evidence="1">
    <location>
        <begin position="149"/>
        <end position="171"/>
    </location>
</feature>
<feature type="topological domain" description="Extracellular" evidence="1">
    <location>
        <begin position="172"/>
        <end position="193"/>
    </location>
</feature>
<feature type="transmembrane region" description="Helical; Name=5" evidence="1">
    <location>
        <begin position="194"/>
        <end position="216"/>
    </location>
</feature>
<feature type="topological domain" description="Cytoplasmic" evidence="1">
    <location>
        <begin position="217"/>
        <end position="401"/>
    </location>
</feature>
<feature type="transmembrane region" description="Helical; Name=6" evidence="1">
    <location>
        <begin position="402"/>
        <end position="422"/>
    </location>
</feature>
<feature type="topological domain" description="Extracellular" evidence="1">
    <location>
        <begin position="423"/>
        <end position="436"/>
    </location>
</feature>
<feature type="transmembrane region" description="Helical; Name=7" evidence="1">
    <location>
        <begin position="437"/>
        <end position="456"/>
    </location>
</feature>
<feature type="topological domain" description="Cytoplasmic" evidence="1">
    <location>
        <begin position="457"/>
        <end position="479"/>
    </location>
</feature>
<feature type="region of interest" description="Disordered" evidence="4">
    <location>
        <begin position="271"/>
        <end position="333"/>
    </location>
</feature>
<feature type="compositionally biased region" description="Pro residues" evidence="4">
    <location>
        <begin position="275"/>
        <end position="286"/>
    </location>
</feature>
<feature type="compositionally biased region" description="Polar residues" evidence="4">
    <location>
        <begin position="294"/>
        <end position="304"/>
    </location>
</feature>
<feature type="modified residue" description="Phosphothreonine" evidence="2">
    <location>
        <position position="459"/>
    </location>
</feature>
<feature type="modified residue" description="Phosphothreonine" evidence="2">
    <location>
        <position position="463"/>
    </location>
</feature>
<feature type="modified residue" description="Phosphothreonine" evidence="2">
    <location>
        <position position="477"/>
    </location>
</feature>
<feature type="glycosylation site" description="N-linked (GlcNAc...) asparagine" evidence="2">
    <location>
        <position position="8"/>
    </location>
</feature>
<feature type="glycosylation site" description="N-linked (GlcNAc...) asparagine" evidence="2">
    <location>
        <position position="13"/>
    </location>
</feature>
<feature type="disulfide bond" evidence="3">
    <location>
        <begin position="105"/>
        <end position="185"/>
    </location>
</feature>
<feature type="helix" evidence="6">
    <location>
        <begin position="34"/>
        <end position="59"/>
    </location>
</feature>
<feature type="helix" evidence="6">
    <location>
        <begin position="61"/>
        <end position="63"/>
    </location>
</feature>
<feature type="helix" evidence="6">
    <location>
        <begin position="67"/>
        <end position="83"/>
    </location>
</feature>
<feature type="helix" evidence="6">
    <location>
        <begin position="85"/>
        <end position="95"/>
    </location>
</feature>
<feature type="helix" evidence="6">
    <location>
        <begin position="103"/>
        <end position="135"/>
    </location>
</feature>
<feature type="turn" evidence="6">
    <location>
        <begin position="137"/>
        <end position="142"/>
    </location>
</feature>
<feature type="helix" evidence="6">
    <location>
        <begin position="146"/>
        <end position="174"/>
    </location>
</feature>
<feature type="strand" evidence="6">
    <location>
        <begin position="175"/>
        <end position="177"/>
    </location>
</feature>
<feature type="strand" evidence="6">
    <location>
        <begin position="182"/>
        <end position="184"/>
    </location>
</feature>
<feature type="helix" evidence="6">
    <location>
        <begin position="188"/>
        <end position="191"/>
    </location>
</feature>
<feature type="helix" evidence="6">
    <location>
        <begin position="193"/>
        <end position="203"/>
    </location>
</feature>
<feature type="helix" evidence="6">
    <location>
        <begin position="205"/>
        <end position="222"/>
    </location>
</feature>
<feature type="strand" evidence="5">
    <location>
        <begin position="223"/>
        <end position="225"/>
    </location>
</feature>
<feature type="helix" evidence="5">
    <location>
        <begin position="226"/>
        <end position="229"/>
    </location>
</feature>
<feature type="helix" evidence="5">
    <location>
        <begin position="232"/>
        <end position="237"/>
    </location>
</feature>
<feature type="helix" evidence="6">
    <location>
        <begin position="393"/>
        <end position="425"/>
    </location>
</feature>
<feature type="strand" evidence="7">
    <location>
        <begin position="427"/>
        <end position="430"/>
    </location>
</feature>
<feature type="helix" evidence="6">
    <location>
        <begin position="432"/>
        <end position="447"/>
    </location>
</feature>
<feature type="helix" evidence="6">
    <location>
        <begin position="449"/>
        <end position="453"/>
    </location>
</feature>
<feature type="turn" evidence="6">
    <location>
        <begin position="454"/>
        <end position="456"/>
    </location>
</feature>
<feature type="helix" evidence="6">
    <location>
        <begin position="458"/>
        <end position="462"/>
    </location>
</feature>
<gene>
    <name type="primary">CHRM4</name>
</gene>
<name>ACM4_HUMAN</name>
<evidence type="ECO:0000250" key="1"/>
<evidence type="ECO:0000255" key="2"/>
<evidence type="ECO:0000255" key="3">
    <source>
        <dbReference type="PROSITE-ProRule" id="PRU00521"/>
    </source>
</evidence>
<evidence type="ECO:0000256" key="4">
    <source>
        <dbReference type="SAM" id="MobiDB-lite"/>
    </source>
</evidence>
<evidence type="ECO:0007829" key="5">
    <source>
        <dbReference type="PDB" id="5DSG"/>
    </source>
</evidence>
<evidence type="ECO:0007829" key="6">
    <source>
        <dbReference type="PDB" id="7TRP"/>
    </source>
</evidence>
<evidence type="ECO:0007829" key="7">
    <source>
        <dbReference type="PDB" id="7TRQ"/>
    </source>
</evidence>
<dbReference type="EMBL" id="M16405">
    <property type="protein sequence ID" value="AAA51571.2"/>
    <property type="molecule type" value="Genomic_DNA"/>
</dbReference>
<dbReference type="EMBL" id="X15265">
    <property type="protein sequence ID" value="CAA33336.1"/>
    <property type="molecule type" value="Genomic_DNA"/>
</dbReference>
<dbReference type="EMBL" id="AF498918">
    <property type="protein sequence ID" value="AAM18941.1"/>
    <property type="molecule type" value="mRNA"/>
</dbReference>
<dbReference type="EMBL" id="CH471064">
    <property type="protein sequence ID" value="EAW68004.1"/>
    <property type="molecule type" value="Genomic_DNA"/>
</dbReference>
<dbReference type="EMBL" id="BC095546">
    <property type="protein sequence ID" value="AAH95546.1"/>
    <property type="molecule type" value="mRNA"/>
</dbReference>
<dbReference type="EMBL" id="BC119775">
    <property type="protein sequence ID" value="AAI19776.1"/>
    <property type="molecule type" value="mRNA"/>
</dbReference>
<dbReference type="EMBL" id="BC119817">
    <property type="protein sequence ID" value="AAI19818.1"/>
    <property type="molecule type" value="mRNA"/>
</dbReference>
<dbReference type="EMBL" id="BC137535">
    <property type="protein sequence ID" value="AAI37536.1"/>
    <property type="molecule type" value="mRNA"/>
</dbReference>
<dbReference type="CCDS" id="CCDS44581.1"/>
<dbReference type="PIR" id="S10127">
    <property type="entry name" value="S10127"/>
</dbReference>
<dbReference type="RefSeq" id="NP_000732.2">
    <property type="nucleotide sequence ID" value="NM_000741.3"/>
</dbReference>
<dbReference type="RefSeq" id="NP_001353621.1">
    <property type="nucleotide sequence ID" value="NM_001366692.2"/>
</dbReference>
<dbReference type="PDB" id="5DSG">
    <property type="method" value="X-ray"/>
    <property type="resolution" value="2.60 A"/>
    <property type="chains" value="A/B=22-226, A/B=390-478"/>
</dbReference>
<dbReference type="PDB" id="6D9H">
    <property type="method" value="EM"/>
    <property type="resolution" value="3.60 A"/>
    <property type="chains" value="R=2-23"/>
</dbReference>
<dbReference type="PDB" id="6KP6">
    <property type="method" value="X-ray"/>
    <property type="resolution" value="3.00 A"/>
    <property type="chains" value="A=22-227, A=390-479"/>
</dbReference>
<dbReference type="PDB" id="7LD3">
    <property type="method" value="EM"/>
    <property type="resolution" value="3.20 A"/>
    <property type="chains" value="R=2-23"/>
</dbReference>
<dbReference type="PDB" id="7LD4">
    <property type="method" value="EM"/>
    <property type="resolution" value="3.30 A"/>
    <property type="chains" value="R=2-23"/>
</dbReference>
<dbReference type="PDB" id="7TRK">
    <property type="method" value="EM"/>
    <property type="resolution" value="2.80 A"/>
    <property type="chains" value="R=1-479"/>
</dbReference>
<dbReference type="PDB" id="7TRP">
    <property type="method" value="EM"/>
    <property type="resolution" value="2.40 A"/>
    <property type="chains" value="R=1-479"/>
</dbReference>
<dbReference type="PDB" id="7TRQ">
    <property type="method" value="EM"/>
    <property type="resolution" value="2.50 A"/>
    <property type="chains" value="R=1-479"/>
</dbReference>
<dbReference type="PDB" id="7TRS">
    <property type="method" value="EM"/>
    <property type="resolution" value="2.80 A"/>
    <property type="chains" value="R=1-479"/>
</dbReference>
<dbReference type="PDB" id="7V68">
    <property type="method" value="EM"/>
    <property type="resolution" value="3.40 A"/>
    <property type="chains" value="R=1-479"/>
</dbReference>
<dbReference type="PDB" id="7V69">
    <property type="method" value="EM"/>
    <property type="resolution" value="3.40 A"/>
    <property type="chains" value="R=1-479"/>
</dbReference>
<dbReference type="PDB" id="7V6A">
    <property type="method" value="EM"/>
    <property type="resolution" value="3.60 A"/>
    <property type="chains" value="R=1-479"/>
</dbReference>
<dbReference type="PDB" id="8E9X">
    <property type="method" value="EM"/>
    <property type="resolution" value="2.70 A"/>
    <property type="chains" value="A=1-479"/>
</dbReference>
<dbReference type="PDB" id="8FX5">
    <property type="method" value="EM"/>
    <property type="resolution" value="2.45 A"/>
    <property type="chains" value="R=1-479"/>
</dbReference>
<dbReference type="PDB" id="8IYH">
    <property type="method" value="EM"/>
    <property type="resolution" value="3.30 A"/>
    <property type="chains" value="D=2-23"/>
</dbReference>
<dbReference type="PDB" id="8IYW">
    <property type="method" value="EM"/>
    <property type="resolution" value="3.45 A"/>
    <property type="chains" value="R=2-23"/>
</dbReference>
<dbReference type="PDB" id="8JER">
    <property type="method" value="EM"/>
    <property type="resolution" value="3.45 A"/>
    <property type="chains" value="R=2-23"/>
</dbReference>
<dbReference type="PDB" id="8JHN">
    <property type="method" value="EM"/>
    <property type="resolution" value="3.75 A"/>
    <property type="chains" value="D=2-23"/>
</dbReference>
<dbReference type="PDBsum" id="5DSG"/>
<dbReference type="PDBsum" id="6D9H"/>
<dbReference type="PDBsum" id="6KP6"/>
<dbReference type="PDBsum" id="7LD3"/>
<dbReference type="PDBsum" id="7LD4"/>
<dbReference type="PDBsum" id="7TRK"/>
<dbReference type="PDBsum" id="7TRP"/>
<dbReference type="PDBsum" id="7TRQ"/>
<dbReference type="PDBsum" id="7TRS"/>
<dbReference type="PDBsum" id="7V68"/>
<dbReference type="PDBsum" id="7V69"/>
<dbReference type="PDBsum" id="7V6A"/>
<dbReference type="PDBsum" id="8E9X"/>
<dbReference type="PDBsum" id="8FX5"/>
<dbReference type="PDBsum" id="8IYH"/>
<dbReference type="PDBsum" id="8IYW"/>
<dbReference type="PDBsum" id="8JER"/>
<dbReference type="PDBsum" id="8JHN"/>
<dbReference type="EMDB" id="EMD-26099"/>
<dbReference type="EMDB" id="EMD-26100"/>
<dbReference type="EMDB" id="EMD-26101"/>
<dbReference type="EMDB" id="EMD-26102"/>
<dbReference type="EMDB" id="EMD-27967"/>
<dbReference type="EMDB" id="EMD-29524"/>
<dbReference type="EMDB" id="EMD-31738"/>
<dbReference type="EMDB" id="EMD-31739"/>
<dbReference type="EMDB" id="EMD-31740"/>
<dbReference type="SMR" id="P08173"/>
<dbReference type="BioGRID" id="107554">
    <property type="interactions" value="93"/>
</dbReference>
<dbReference type="CORUM" id="P08173"/>
<dbReference type="DIP" id="DIP-61455N"/>
<dbReference type="FunCoup" id="P08173">
    <property type="interactions" value="1088"/>
</dbReference>
<dbReference type="IntAct" id="P08173">
    <property type="interactions" value="94"/>
</dbReference>
<dbReference type="MINT" id="P08173"/>
<dbReference type="STRING" id="9606.ENSP00000409378"/>
<dbReference type="BindingDB" id="P08173"/>
<dbReference type="ChEMBL" id="CHEMBL1821"/>
<dbReference type="DrugBank" id="DB13262">
    <property type="generic name" value="Aceclidine"/>
</dbReference>
<dbReference type="DrugBank" id="DB03128">
    <property type="generic name" value="Acetylcholine"/>
</dbReference>
<dbReference type="DrugBank" id="DB08897">
    <property type="generic name" value="Aclidinium"/>
</dbReference>
<dbReference type="DrugBank" id="DB05752">
    <property type="generic name" value="ALKS 27"/>
</dbReference>
<dbReference type="DrugBank" id="DB00321">
    <property type="generic name" value="Amitriptyline"/>
</dbReference>
<dbReference type="DrugBank" id="DB00543">
    <property type="generic name" value="Amoxapine"/>
</dbReference>
<dbReference type="DrugBank" id="DB01238">
    <property type="generic name" value="Aripiprazole"/>
</dbReference>
<dbReference type="DrugBank" id="DB14185">
    <property type="generic name" value="Aripiprazole lauroxil"/>
</dbReference>
<dbReference type="DrugBank" id="DB00572">
    <property type="generic name" value="Atropine"/>
</dbReference>
<dbReference type="DrugBank" id="DB00767">
    <property type="generic name" value="Benzquinamide"/>
</dbReference>
<dbReference type="DrugBank" id="DB01019">
    <property type="generic name" value="Bethanechol"/>
</dbReference>
<dbReference type="DrugBank" id="DB00835">
    <property type="generic name" value="Brompheniramine"/>
</dbReference>
<dbReference type="DrugBank" id="DB00411">
    <property type="generic name" value="Carbamoylcholine"/>
</dbReference>
<dbReference type="DrugBank" id="DB01239">
    <property type="generic name" value="Chlorprothixene"/>
</dbReference>
<dbReference type="DrugBank" id="DB00568">
    <property type="generic name" value="Cinnarizine"/>
</dbReference>
<dbReference type="DrugBank" id="DB00363">
    <property type="generic name" value="Clozapine"/>
</dbReference>
<dbReference type="DrugBank" id="DB00496">
    <property type="generic name" value="Darifenacin"/>
</dbReference>
<dbReference type="DrugBank" id="DB01151">
    <property type="generic name" value="Desipramine"/>
</dbReference>
<dbReference type="DrugBank" id="DB01231">
    <property type="generic name" value="Diphenidol"/>
</dbReference>
<dbReference type="DrugBank" id="DB09167">
    <property type="generic name" value="Dosulepin"/>
</dbReference>
<dbReference type="DrugBank" id="DB01142">
    <property type="generic name" value="Doxepin"/>
</dbReference>
<dbReference type="DrugBank" id="DB00366">
    <property type="generic name" value="Doxylamine"/>
</dbReference>
<dbReference type="DrugBank" id="DB09194">
    <property type="generic name" value="Etoperidone"/>
</dbReference>
<dbReference type="DrugBank" id="DB06702">
    <property type="generic name" value="Fesoterodine"/>
</dbReference>
<dbReference type="DrugBank" id="DB00986">
    <property type="generic name" value="Glycopyrronium"/>
</dbReference>
<dbReference type="DrugBank" id="DB06787">
    <property type="generic name" value="Hexocyclium"/>
</dbReference>
<dbReference type="DrugBank" id="DB11181">
    <property type="generic name" value="Homatropine"/>
</dbReference>
<dbReference type="DrugBank" id="DB00725">
    <property type="generic name" value="Homatropine methylbromide"/>
</dbReference>
<dbReference type="DrugBank" id="DB00424">
    <property type="generic name" value="Hyoscyamine"/>
</dbReference>
<dbReference type="DrugBank" id="DB00458">
    <property type="generic name" value="Imipramine"/>
</dbReference>
<dbReference type="DrugBank" id="DB01625">
    <property type="generic name" value="Isopropamide"/>
</dbReference>
<dbReference type="DrugBank" id="DB01221">
    <property type="generic name" value="Ketamine"/>
</dbReference>
<dbReference type="DrugBank" id="DB00408">
    <property type="generic name" value="Loxapine"/>
</dbReference>
<dbReference type="DrugBank" id="DB00934">
    <property type="generic name" value="Maprotiline"/>
</dbReference>
<dbReference type="DrugBank" id="DB00454">
    <property type="generic name" value="Meperidine"/>
</dbReference>
<dbReference type="DrugBank" id="DB06709">
    <property type="generic name" value="Methacholine"/>
</dbReference>
<dbReference type="DrugBank" id="DB00940">
    <property type="generic name" value="Methantheline"/>
</dbReference>
<dbReference type="DrugBank" id="DB01403">
    <property type="generic name" value="Methotrimeprazine"/>
</dbReference>
<dbReference type="DrugBank" id="DB00340">
    <property type="generic name" value="Metixene"/>
</dbReference>
<dbReference type="DrugBank" id="DB00622">
    <property type="generic name" value="Nicardipine"/>
</dbReference>
<dbReference type="DrugBank" id="DB00540">
    <property type="generic name" value="Nortriptyline"/>
</dbReference>
<dbReference type="DrugBank" id="DB00334">
    <property type="generic name" value="Olanzapine"/>
</dbReference>
<dbReference type="DrugBank" id="DB00715">
    <property type="generic name" value="Paroxetine"/>
</dbReference>
<dbReference type="DrugBank" id="DB01085">
    <property type="generic name" value="Pilocarpine"/>
</dbReference>
<dbReference type="DrugBank" id="DB00387">
    <property type="generic name" value="Procyclidine"/>
</dbReference>
<dbReference type="DrugBank" id="DB01069">
    <property type="generic name" value="Promethazine"/>
</dbReference>
<dbReference type="DrugBank" id="DB00777">
    <property type="generic name" value="Propiomazine"/>
</dbReference>
<dbReference type="DrugBank" id="DB12278">
    <property type="generic name" value="Propiverine"/>
</dbReference>
<dbReference type="DrugBank" id="DB01224">
    <property type="generic name" value="Quetiapine"/>
</dbReference>
<dbReference type="DrugBank" id="DB11855">
    <property type="generic name" value="Revefenacin"/>
</dbReference>
<dbReference type="DrugBank" id="DB13581">
    <property type="generic name" value="Rociverine"/>
</dbReference>
<dbReference type="DrugBank" id="DB00747">
    <property type="generic name" value="Scopolamine"/>
</dbReference>
<dbReference type="DrugBank" id="DB19325">
    <property type="generic name" value="Sofpironium"/>
</dbReference>
<dbReference type="DrugBank" id="DB01591">
    <property type="generic name" value="Solifenacin"/>
</dbReference>
<dbReference type="DrugBank" id="DB00342">
    <property type="generic name" value="Terfenadine"/>
</dbReference>
<dbReference type="DrugBank" id="DB11235">
    <property type="generic name" value="Thonzylamine"/>
</dbReference>
<dbReference type="DrugBank" id="DB01409">
    <property type="generic name" value="Tiotropium"/>
</dbReference>
<dbReference type="DrugBank" id="DB01036">
    <property type="generic name" value="Tolterodine"/>
</dbReference>
<dbReference type="DrugBank" id="DB00376">
    <property type="generic name" value="Trihexyphenidyl"/>
</dbReference>
<dbReference type="DrugBank" id="DB09089">
    <property type="generic name" value="Trimebutine"/>
</dbReference>
<dbReference type="DrugBank" id="DB00726">
    <property type="generic name" value="Trimipramine"/>
</dbReference>
<dbReference type="DrugBank" id="DB00809">
    <property type="generic name" value="Tropicamide"/>
</dbReference>
<dbReference type="DrugBank" id="DB09076">
    <property type="generic name" value="Umeclidinium"/>
</dbReference>
<dbReference type="DrugBank" id="DB09185">
    <property type="generic name" value="Viloxazine"/>
</dbReference>
<dbReference type="DrugBank" id="DB15357">
    <property type="generic name" value="Xanomeline"/>
</dbReference>
<dbReference type="DrugBank" id="DB00246">
    <property type="generic name" value="Ziprasidone"/>
</dbReference>
<dbReference type="DrugCentral" id="P08173"/>
<dbReference type="GuidetoPHARMACOLOGY" id="16"/>
<dbReference type="GlyCosmos" id="P08173">
    <property type="glycosylation" value="2 sites, No reported glycans"/>
</dbReference>
<dbReference type="GlyGen" id="P08173">
    <property type="glycosylation" value="2 sites"/>
</dbReference>
<dbReference type="iPTMnet" id="P08173"/>
<dbReference type="PhosphoSitePlus" id="P08173"/>
<dbReference type="BioMuta" id="CHRM4"/>
<dbReference type="DMDM" id="23503039"/>
<dbReference type="MassIVE" id="P08173"/>
<dbReference type="PaxDb" id="9606-ENSP00000409378"/>
<dbReference type="PeptideAtlas" id="P08173"/>
<dbReference type="Antibodypedia" id="26327">
    <property type="antibodies" value="197 antibodies from 30 providers"/>
</dbReference>
<dbReference type="DNASU" id="1132"/>
<dbReference type="Ensembl" id="ENST00000433765.3">
    <property type="protein sequence ID" value="ENSP00000409378.2"/>
    <property type="gene ID" value="ENSG00000180720.8"/>
</dbReference>
<dbReference type="Ensembl" id="ENST00000682254.1">
    <property type="protein sequence ID" value="ENSP00000507561.1"/>
    <property type="gene ID" value="ENSG00000180720.8"/>
</dbReference>
<dbReference type="GeneID" id="1132"/>
<dbReference type="KEGG" id="hsa:1132"/>
<dbReference type="MANE-Select" id="ENST00000682254.1">
    <property type="protein sequence ID" value="ENSP00000507561.1"/>
    <property type="RefSeq nucleotide sequence ID" value="NM_000741.5"/>
    <property type="RefSeq protein sequence ID" value="NP_000732.2"/>
</dbReference>
<dbReference type="UCSC" id="uc001nct.2">
    <property type="organism name" value="human"/>
</dbReference>
<dbReference type="AGR" id="HGNC:1953"/>
<dbReference type="CTD" id="1132"/>
<dbReference type="DisGeNET" id="1132"/>
<dbReference type="GeneCards" id="CHRM4"/>
<dbReference type="HGNC" id="HGNC:1953">
    <property type="gene designation" value="CHRM4"/>
</dbReference>
<dbReference type="HPA" id="ENSG00000180720">
    <property type="expression patterns" value="Tissue enhanced (brain, intestine, lymphoid tissue)"/>
</dbReference>
<dbReference type="MIM" id="118495">
    <property type="type" value="gene"/>
</dbReference>
<dbReference type="neXtProt" id="NX_P08173"/>
<dbReference type="OpenTargets" id="ENSG00000180720"/>
<dbReference type="PharmGKB" id="PA26485"/>
<dbReference type="VEuPathDB" id="HostDB:ENSG00000180720"/>
<dbReference type="eggNOG" id="KOG4220">
    <property type="taxonomic scope" value="Eukaryota"/>
</dbReference>
<dbReference type="GeneTree" id="ENSGT00940000160394"/>
<dbReference type="HOGENOM" id="CLU_009579_11_2_1"/>
<dbReference type="InParanoid" id="P08173"/>
<dbReference type="OMA" id="INTFCNY"/>
<dbReference type="OrthoDB" id="10071887at2759"/>
<dbReference type="PAN-GO" id="P08173">
    <property type="GO annotations" value="8 GO annotations based on evolutionary models"/>
</dbReference>
<dbReference type="PhylomeDB" id="P08173"/>
<dbReference type="TreeFam" id="TF320495"/>
<dbReference type="PathwayCommons" id="P08173"/>
<dbReference type="Reactome" id="R-HSA-390648">
    <property type="pathway name" value="Muscarinic acetylcholine receptors"/>
</dbReference>
<dbReference type="Reactome" id="R-HSA-418594">
    <property type="pathway name" value="G alpha (i) signalling events"/>
</dbReference>
<dbReference type="SignaLink" id="P08173"/>
<dbReference type="SIGNOR" id="P08173"/>
<dbReference type="BioGRID-ORCS" id="1132">
    <property type="hits" value="18 hits in 1151 CRISPR screens"/>
</dbReference>
<dbReference type="EvolutionaryTrace" id="P08173"/>
<dbReference type="GeneWiki" id="Muscarinic_acetylcholine_receptor_M4"/>
<dbReference type="GenomeRNAi" id="1132"/>
<dbReference type="Pharos" id="P08173">
    <property type="development level" value="Tclin"/>
</dbReference>
<dbReference type="PRO" id="PR:P08173"/>
<dbReference type="Proteomes" id="UP000005640">
    <property type="component" value="Chromosome 11"/>
</dbReference>
<dbReference type="RNAct" id="P08173">
    <property type="molecule type" value="protein"/>
</dbReference>
<dbReference type="Bgee" id="ENSG00000180720">
    <property type="expression patterns" value="Expressed in male germ line stem cell (sensu Vertebrata) in testis and 86 other cell types or tissues"/>
</dbReference>
<dbReference type="GO" id="GO:0030425">
    <property type="term" value="C:dendrite"/>
    <property type="evidence" value="ECO:0000318"/>
    <property type="project" value="GO_Central"/>
</dbReference>
<dbReference type="GO" id="GO:0005886">
    <property type="term" value="C:plasma membrane"/>
    <property type="evidence" value="ECO:0000318"/>
    <property type="project" value="GO_Central"/>
</dbReference>
<dbReference type="GO" id="GO:0045211">
    <property type="term" value="C:postsynaptic membrane"/>
    <property type="evidence" value="ECO:0007669"/>
    <property type="project" value="UniProtKB-SubCell"/>
</dbReference>
<dbReference type="GO" id="GO:0045202">
    <property type="term" value="C:synapse"/>
    <property type="evidence" value="ECO:0000318"/>
    <property type="project" value="GO_Central"/>
</dbReference>
<dbReference type="GO" id="GO:0016907">
    <property type="term" value="F:G protein-coupled acetylcholine receptor activity"/>
    <property type="evidence" value="ECO:0000318"/>
    <property type="project" value="GO_Central"/>
</dbReference>
<dbReference type="GO" id="GO:0007197">
    <property type="term" value="P:adenylate cyclase-inhibiting G protein-coupled acetylcholine receptor signaling pathway"/>
    <property type="evidence" value="ECO:0000318"/>
    <property type="project" value="GO_Central"/>
</dbReference>
<dbReference type="GO" id="GO:0007166">
    <property type="term" value="P:cell surface receptor signaling pathway"/>
    <property type="evidence" value="ECO:0000304"/>
    <property type="project" value="ProtInc"/>
</dbReference>
<dbReference type="GO" id="GO:0007268">
    <property type="term" value="P:chemical synaptic transmission"/>
    <property type="evidence" value="ECO:0000318"/>
    <property type="project" value="GO_Central"/>
</dbReference>
<dbReference type="GO" id="GO:0007213">
    <property type="term" value="P:G protein-coupled acetylcholine receptor signaling pathway"/>
    <property type="evidence" value="ECO:0000304"/>
    <property type="project" value="ProtInc"/>
</dbReference>
<dbReference type="GO" id="GO:0007187">
    <property type="term" value="P:G protein-coupled receptor signaling pathway, coupled to cyclic nucleotide second messenger"/>
    <property type="evidence" value="ECO:0000318"/>
    <property type="project" value="GO_Central"/>
</dbReference>
<dbReference type="GO" id="GO:0040012">
    <property type="term" value="P:regulation of locomotion"/>
    <property type="evidence" value="ECO:0007669"/>
    <property type="project" value="InterPro"/>
</dbReference>
<dbReference type="GO" id="GO:0007165">
    <property type="term" value="P:signal transduction"/>
    <property type="evidence" value="ECO:0000304"/>
    <property type="project" value="ProtInc"/>
</dbReference>
<dbReference type="CDD" id="cd15298">
    <property type="entry name" value="7tmA_mAChR_M4"/>
    <property type="match status" value="1"/>
</dbReference>
<dbReference type="FunFam" id="1.20.1070.10:FF:000038">
    <property type="entry name" value="Muscarinic acetylcholine receptor"/>
    <property type="match status" value="1"/>
</dbReference>
<dbReference type="FunFam" id="1.20.1070.10:FF:000041">
    <property type="entry name" value="Muscarinic acetylcholine receptor"/>
    <property type="match status" value="1"/>
</dbReference>
<dbReference type="Gene3D" id="1.20.1070.10">
    <property type="entry name" value="Rhodopsin 7-helix transmembrane proteins"/>
    <property type="match status" value="2"/>
</dbReference>
<dbReference type="InterPro" id="IPR000276">
    <property type="entry name" value="GPCR_Rhodpsn"/>
</dbReference>
<dbReference type="InterPro" id="IPR017452">
    <property type="entry name" value="GPCR_Rhodpsn_7TM"/>
</dbReference>
<dbReference type="InterPro" id="IPR001432">
    <property type="entry name" value="Musac_Ach_M4_rcpt"/>
</dbReference>
<dbReference type="InterPro" id="IPR000995">
    <property type="entry name" value="Musac_Ach_rcpt"/>
</dbReference>
<dbReference type="PANTHER" id="PTHR24247">
    <property type="entry name" value="5-HYDROXYTRYPTAMINE RECEPTOR"/>
    <property type="match status" value="1"/>
</dbReference>
<dbReference type="PANTHER" id="PTHR24247:SF180">
    <property type="entry name" value="MUSCARINIC ACETYLCHOLINE RECEPTOR M4"/>
    <property type="match status" value="1"/>
</dbReference>
<dbReference type="Pfam" id="PF00001">
    <property type="entry name" value="7tm_1"/>
    <property type="match status" value="1"/>
</dbReference>
<dbReference type="PRINTS" id="PR00237">
    <property type="entry name" value="GPCRRHODOPSN"/>
</dbReference>
<dbReference type="PRINTS" id="PR00243">
    <property type="entry name" value="MUSCARINICR"/>
</dbReference>
<dbReference type="PRINTS" id="PR00541">
    <property type="entry name" value="MUSCRINICM4R"/>
</dbReference>
<dbReference type="SMART" id="SM01381">
    <property type="entry name" value="7TM_GPCR_Srsx"/>
    <property type="match status" value="1"/>
</dbReference>
<dbReference type="SUPFAM" id="SSF81321">
    <property type="entry name" value="Family A G protein-coupled receptor-like"/>
    <property type="match status" value="1"/>
</dbReference>
<dbReference type="PROSITE" id="PS00237">
    <property type="entry name" value="G_PROTEIN_RECEP_F1_1"/>
    <property type="match status" value="1"/>
</dbReference>
<dbReference type="PROSITE" id="PS50262">
    <property type="entry name" value="G_PROTEIN_RECEP_F1_2"/>
    <property type="match status" value="1"/>
</dbReference>
<sequence length="479" mass="53049">MANFTPVNGSSGNQSVRLVTSSSHNRYETVEMVFIATVTGSLSLVTVVGNILVMLSIKVNRQLQTVNNYFLFSLACADLIIGAFSMNLYTVYIIKGYWPLGAVVCDLWLALDYVVSNASVMNLLIISFDRYFCVTKPLTYPARRTTKMAGLMIAAAWVLSFVLWAPAILFWQFVVGKRTVPDNQCFIQFLSNPAVTFGTAIAAFYLPVVIMTVLYIHISLASRSRVHKHRPEGPKEKKAKTLAFLKSPLMKQSVKKPPPGEAAREELRNGKLEEAPPPALPPPPRPVADKDTSNESSSGSATQNTKERPATELSTTEATTPAMPAPPLQPRALNPASRWSKIQIVTKQTGNECVTAIEIVPATPAGMRPAANVARKFASIARNQVRKKRQMAARERKVTRTIFAILLAFILTWTPYNVMVLVNTFCQSCIPDTVWSIGYWLCYVNSTINPACYALCNATFKKTFRHLLLCQYRNIGTAR</sequence>
<accession>P08173</accession>
<accession>B2RPP4</accession>
<accession>Q0VD60</accession>
<accession>Q4VBK7</accession>